<reference key="1">
    <citation type="submission" date="2006-09" db="EMBL/GenBank/DDBJ databases">
        <authorList>
            <consortium name="The Klebsiella pneumonia Genome Sequencing Project"/>
            <person name="McClelland M."/>
            <person name="Sanderson E.K."/>
            <person name="Spieth J."/>
            <person name="Clifton W.S."/>
            <person name="Latreille P."/>
            <person name="Sabo A."/>
            <person name="Pepin K."/>
            <person name="Bhonagiri V."/>
            <person name="Porwollik S."/>
            <person name="Ali J."/>
            <person name="Wilson R.K."/>
        </authorList>
    </citation>
    <scope>NUCLEOTIDE SEQUENCE [LARGE SCALE GENOMIC DNA]</scope>
    <source>
        <strain>ATCC 700721 / MGH 78578</strain>
    </source>
</reference>
<keyword id="KW-0687">Ribonucleoprotein</keyword>
<keyword id="KW-0689">Ribosomal protein</keyword>
<keyword id="KW-0694">RNA-binding</keyword>
<keyword id="KW-0699">rRNA-binding</keyword>
<name>RL18_KLEP7</name>
<protein>
    <recommendedName>
        <fullName evidence="1">Large ribosomal subunit protein uL18</fullName>
    </recommendedName>
    <alternativeName>
        <fullName evidence="2">50S ribosomal protein L18</fullName>
    </alternativeName>
</protein>
<organism>
    <name type="scientific">Klebsiella pneumoniae subsp. pneumoniae (strain ATCC 700721 / MGH 78578)</name>
    <dbReference type="NCBI Taxonomy" id="272620"/>
    <lineage>
        <taxon>Bacteria</taxon>
        <taxon>Pseudomonadati</taxon>
        <taxon>Pseudomonadota</taxon>
        <taxon>Gammaproteobacteria</taxon>
        <taxon>Enterobacterales</taxon>
        <taxon>Enterobacteriaceae</taxon>
        <taxon>Klebsiella/Raoultella group</taxon>
        <taxon>Klebsiella</taxon>
        <taxon>Klebsiella pneumoniae complex</taxon>
    </lineage>
</organism>
<feature type="chain" id="PRO_1000053041" description="Large ribosomal subunit protein uL18">
    <location>
        <begin position="1"/>
        <end position="117"/>
    </location>
</feature>
<sequence>MDKKSARIRRATRARRKLQELGATRLVVHRTPRHIYAQVIAPNGSEVLVAASTVEKAIAEQLKYTGNKDAAAAVGKAVAERALEKGIKDVSFDRSGFQYHGRVQALADAAREAGLQF</sequence>
<dbReference type="EMBL" id="CP000647">
    <property type="protein sequence ID" value="ABR79090.1"/>
    <property type="molecule type" value="Genomic_DNA"/>
</dbReference>
<dbReference type="RefSeq" id="WP_000358960.1">
    <property type="nucleotide sequence ID" value="NC_009648.1"/>
</dbReference>
<dbReference type="SMR" id="A6TEV6"/>
<dbReference type="STRING" id="272620.KPN_03703"/>
<dbReference type="jPOST" id="A6TEV6"/>
<dbReference type="PaxDb" id="272620-KPN_03703"/>
<dbReference type="EnsemblBacteria" id="ABR79090">
    <property type="protein sequence ID" value="ABR79090"/>
    <property type="gene ID" value="KPN_03703"/>
</dbReference>
<dbReference type="GeneID" id="98390426"/>
<dbReference type="KEGG" id="kpn:KPN_03703"/>
<dbReference type="HOGENOM" id="CLU_098841_0_1_6"/>
<dbReference type="Proteomes" id="UP000000265">
    <property type="component" value="Chromosome"/>
</dbReference>
<dbReference type="GO" id="GO:0022625">
    <property type="term" value="C:cytosolic large ribosomal subunit"/>
    <property type="evidence" value="ECO:0007669"/>
    <property type="project" value="TreeGrafter"/>
</dbReference>
<dbReference type="GO" id="GO:0008097">
    <property type="term" value="F:5S rRNA binding"/>
    <property type="evidence" value="ECO:0007669"/>
    <property type="project" value="TreeGrafter"/>
</dbReference>
<dbReference type="GO" id="GO:0003735">
    <property type="term" value="F:structural constituent of ribosome"/>
    <property type="evidence" value="ECO:0007669"/>
    <property type="project" value="InterPro"/>
</dbReference>
<dbReference type="GO" id="GO:0006412">
    <property type="term" value="P:translation"/>
    <property type="evidence" value="ECO:0007669"/>
    <property type="project" value="UniProtKB-UniRule"/>
</dbReference>
<dbReference type="CDD" id="cd00432">
    <property type="entry name" value="Ribosomal_L18_L5e"/>
    <property type="match status" value="1"/>
</dbReference>
<dbReference type="FunFam" id="3.30.420.100:FF:000001">
    <property type="entry name" value="50S ribosomal protein L18"/>
    <property type="match status" value="1"/>
</dbReference>
<dbReference type="Gene3D" id="3.30.420.100">
    <property type="match status" value="1"/>
</dbReference>
<dbReference type="HAMAP" id="MF_01337_B">
    <property type="entry name" value="Ribosomal_uL18_B"/>
    <property type="match status" value="1"/>
</dbReference>
<dbReference type="InterPro" id="IPR004389">
    <property type="entry name" value="Ribosomal_uL18_bac-type"/>
</dbReference>
<dbReference type="InterPro" id="IPR005484">
    <property type="entry name" value="Ribosomal_uL18_bac/euk"/>
</dbReference>
<dbReference type="NCBIfam" id="TIGR00060">
    <property type="entry name" value="L18_bact"/>
    <property type="match status" value="1"/>
</dbReference>
<dbReference type="PANTHER" id="PTHR12899">
    <property type="entry name" value="39S RIBOSOMAL PROTEIN L18, MITOCHONDRIAL"/>
    <property type="match status" value="1"/>
</dbReference>
<dbReference type="PANTHER" id="PTHR12899:SF3">
    <property type="entry name" value="LARGE RIBOSOMAL SUBUNIT PROTEIN UL18M"/>
    <property type="match status" value="1"/>
</dbReference>
<dbReference type="Pfam" id="PF00861">
    <property type="entry name" value="Ribosomal_L18p"/>
    <property type="match status" value="1"/>
</dbReference>
<dbReference type="SUPFAM" id="SSF53137">
    <property type="entry name" value="Translational machinery components"/>
    <property type="match status" value="1"/>
</dbReference>
<proteinExistence type="inferred from homology"/>
<evidence type="ECO:0000255" key="1">
    <source>
        <dbReference type="HAMAP-Rule" id="MF_01337"/>
    </source>
</evidence>
<evidence type="ECO:0000305" key="2"/>
<gene>
    <name evidence="1" type="primary">rplR</name>
    <name type="ordered locus">KPN78578_36660</name>
    <name type="ORF">KPN_03703</name>
</gene>
<accession>A6TEV6</accession>
<comment type="function">
    <text evidence="1">This is one of the proteins that bind and probably mediate the attachment of the 5S RNA into the large ribosomal subunit, where it forms part of the central protuberance.</text>
</comment>
<comment type="subunit">
    <text evidence="1">Part of the 50S ribosomal subunit; part of the 5S rRNA/L5/L18/L25 subcomplex. Contacts the 5S and 23S rRNAs.</text>
</comment>
<comment type="similarity">
    <text evidence="1">Belongs to the universal ribosomal protein uL18 family.</text>
</comment>